<feature type="chain" id="PRO_1000014537" description="Small ribosomal subunit protein bS20">
    <location>
        <begin position="1"/>
        <end position="88"/>
    </location>
</feature>
<feature type="region of interest" description="Disordered" evidence="2">
    <location>
        <begin position="1"/>
        <end position="21"/>
    </location>
</feature>
<feature type="compositionally biased region" description="Basic residues" evidence="2">
    <location>
        <begin position="7"/>
        <end position="21"/>
    </location>
</feature>
<evidence type="ECO:0000255" key="1">
    <source>
        <dbReference type="HAMAP-Rule" id="MF_00500"/>
    </source>
</evidence>
<evidence type="ECO:0000256" key="2">
    <source>
        <dbReference type="SAM" id="MobiDB-lite"/>
    </source>
</evidence>
<evidence type="ECO:0000305" key="3"/>
<accession>A3M550</accession>
<reference key="1">
    <citation type="journal article" date="2007" name="Genes Dev.">
        <title>New insights into Acinetobacter baumannii pathogenesis revealed by high-density pyrosequencing and transposon mutagenesis.</title>
        <authorList>
            <person name="Smith M.G."/>
            <person name="Gianoulis T.A."/>
            <person name="Pukatzki S."/>
            <person name="Mekalanos J.J."/>
            <person name="Ornston L.N."/>
            <person name="Gerstein M."/>
            <person name="Snyder M."/>
        </authorList>
    </citation>
    <scope>NUCLEOTIDE SEQUENCE [LARGE SCALE GENOMIC DNA]</scope>
    <source>
        <strain>ATCC 17978 / DSM 105126 / CIP 53.77 / LMG 1025 / NCDC KC755 / 5377</strain>
    </source>
</reference>
<comment type="function">
    <text evidence="1">Binds directly to 16S ribosomal RNA.</text>
</comment>
<comment type="similarity">
    <text evidence="1">Belongs to the bacterial ribosomal protein bS20 family.</text>
</comment>
<gene>
    <name evidence="1" type="primary">rpsT</name>
    <name type="ordered locus">A1S_1617</name>
</gene>
<name>RS20_ACIBT</name>
<proteinExistence type="inferred from homology"/>
<sequence>MANSAQAKKRARQNVKARKHNASLRSMVRTYIKRTLSAIAGGDYAVATEAYKKAVPVIDRMADKGIIHKNKAARHKSRLNAQVKALAN</sequence>
<dbReference type="EMBL" id="CP000521">
    <property type="protein sequence ID" value="ABO12044.1"/>
    <property type="molecule type" value="Genomic_DNA"/>
</dbReference>
<dbReference type="RefSeq" id="WP_000013652.1">
    <property type="nucleotide sequence ID" value="NZ_CP053098.1"/>
</dbReference>
<dbReference type="SMR" id="A3M550"/>
<dbReference type="GeneID" id="92893827"/>
<dbReference type="KEGG" id="acb:A1S_1617"/>
<dbReference type="HOGENOM" id="CLU_160655_4_0_6"/>
<dbReference type="GO" id="GO:0005829">
    <property type="term" value="C:cytosol"/>
    <property type="evidence" value="ECO:0007669"/>
    <property type="project" value="TreeGrafter"/>
</dbReference>
<dbReference type="GO" id="GO:0015935">
    <property type="term" value="C:small ribosomal subunit"/>
    <property type="evidence" value="ECO:0007669"/>
    <property type="project" value="TreeGrafter"/>
</dbReference>
<dbReference type="GO" id="GO:0070181">
    <property type="term" value="F:small ribosomal subunit rRNA binding"/>
    <property type="evidence" value="ECO:0007669"/>
    <property type="project" value="TreeGrafter"/>
</dbReference>
<dbReference type="GO" id="GO:0003735">
    <property type="term" value="F:structural constituent of ribosome"/>
    <property type="evidence" value="ECO:0007669"/>
    <property type="project" value="InterPro"/>
</dbReference>
<dbReference type="GO" id="GO:0006412">
    <property type="term" value="P:translation"/>
    <property type="evidence" value="ECO:0007669"/>
    <property type="project" value="UniProtKB-UniRule"/>
</dbReference>
<dbReference type="FunFam" id="1.20.58.110:FF:000001">
    <property type="entry name" value="30S ribosomal protein S20"/>
    <property type="match status" value="1"/>
</dbReference>
<dbReference type="Gene3D" id="1.20.58.110">
    <property type="entry name" value="Ribosomal protein S20"/>
    <property type="match status" value="1"/>
</dbReference>
<dbReference type="HAMAP" id="MF_00500">
    <property type="entry name" value="Ribosomal_bS20"/>
    <property type="match status" value="1"/>
</dbReference>
<dbReference type="InterPro" id="IPR002583">
    <property type="entry name" value="Ribosomal_bS20"/>
</dbReference>
<dbReference type="InterPro" id="IPR036510">
    <property type="entry name" value="Ribosomal_bS20_sf"/>
</dbReference>
<dbReference type="NCBIfam" id="TIGR00029">
    <property type="entry name" value="S20"/>
    <property type="match status" value="1"/>
</dbReference>
<dbReference type="PANTHER" id="PTHR33398">
    <property type="entry name" value="30S RIBOSOMAL PROTEIN S20"/>
    <property type="match status" value="1"/>
</dbReference>
<dbReference type="PANTHER" id="PTHR33398:SF1">
    <property type="entry name" value="SMALL RIBOSOMAL SUBUNIT PROTEIN BS20C"/>
    <property type="match status" value="1"/>
</dbReference>
<dbReference type="Pfam" id="PF01649">
    <property type="entry name" value="Ribosomal_S20p"/>
    <property type="match status" value="1"/>
</dbReference>
<dbReference type="SUPFAM" id="SSF46992">
    <property type="entry name" value="Ribosomal protein S20"/>
    <property type="match status" value="1"/>
</dbReference>
<protein>
    <recommendedName>
        <fullName evidence="1">Small ribosomal subunit protein bS20</fullName>
    </recommendedName>
    <alternativeName>
        <fullName evidence="3">30S ribosomal protein S20</fullName>
    </alternativeName>
</protein>
<keyword id="KW-0687">Ribonucleoprotein</keyword>
<keyword id="KW-0689">Ribosomal protein</keyword>
<keyword id="KW-0694">RNA-binding</keyword>
<keyword id="KW-0699">rRNA-binding</keyword>
<organism>
    <name type="scientific">Acinetobacter baumannii (strain ATCC 17978 / DSM 105126 / CIP 53.77 / LMG 1025 / NCDC KC755 / 5377)</name>
    <dbReference type="NCBI Taxonomy" id="400667"/>
    <lineage>
        <taxon>Bacteria</taxon>
        <taxon>Pseudomonadati</taxon>
        <taxon>Pseudomonadota</taxon>
        <taxon>Gammaproteobacteria</taxon>
        <taxon>Moraxellales</taxon>
        <taxon>Moraxellaceae</taxon>
        <taxon>Acinetobacter</taxon>
        <taxon>Acinetobacter calcoaceticus/baumannii complex</taxon>
    </lineage>
</organism>